<name>RNT_PSEU2</name>
<reference key="1">
    <citation type="journal article" date="2005" name="Proc. Natl. Acad. Sci. U.S.A.">
        <title>Comparison of the complete genome sequences of Pseudomonas syringae pv. syringae B728a and pv. tomato DC3000.</title>
        <authorList>
            <person name="Feil H."/>
            <person name="Feil W.S."/>
            <person name="Chain P."/>
            <person name="Larimer F."/>
            <person name="Dibartolo G."/>
            <person name="Copeland A."/>
            <person name="Lykidis A."/>
            <person name="Trong S."/>
            <person name="Nolan M."/>
            <person name="Goltsman E."/>
            <person name="Thiel J."/>
            <person name="Malfatti S."/>
            <person name="Loper J.E."/>
            <person name="Lapidus A."/>
            <person name="Detter J.C."/>
            <person name="Land M."/>
            <person name="Richardson P.M."/>
            <person name="Kyrpides N.C."/>
            <person name="Ivanova N."/>
            <person name="Lindow S.E."/>
        </authorList>
    </citation>
    <scope>NUCLEOTIDE SEQUENCE [LARGE SCALE GENOMIC DNA]</scope>
    <source>
        <strain>B728a</strain>
    </source>
</reference>
<sequence>MSEDHFDDEHEGHGGGGGSRHPMAARFRGYLPVVVDVETGGFNSATDALLEIAAVTIGMDEKGFVFPEHTYFFRVEPFEGANIEAAALEFTGIKLDHPLRMAVSEETAMNDIFRGVRKALKANGCKRAVLVGHNASFDLGFVNAAVARMDMKRNPFHPFSSFDTATLAGLAYGQTVLAKACQAAGIDFDGREAHSARYDTEKTAELFCGIVNRWKEMGGWQDFDD</sequence>
<feature type="chain" id="PRO_1000011409" description="Ribonuclease T">
    <location>
        <begin position="1"/>
        <end position="225"/>
    </location>
</feature>
<feature type="domain" description="Exonuclease" evidence="1">
    <location>
        <begin position="33"/>
        <end position="207"/>
    </location>
</feature>
<feature type="region of interest" description="Disordered" evidence="2">
    <location>
        <begin position="1"/>
        <end position="21"/>
    </location>
</feature>
<feature type="active site" description="Proton donor/acceptor" evidence="1">
    <location>
        <position position="194"/>
    </location>
</feature>
<feature type="binding site" evidence="1">
    <location>
        <position position="36"/>
    </location>
    <ligand>
        <name>Mg(2+)</name>
        <dbReference type="ChEBI" id="CHEBI:18420"/>
        <label>1</label>
        <note>catalytic</note>
    </ligand>
</feature>
<feature type="binding site" evidence="1">
    <location>
        <position position="36"/>
    </location>
    <ligand>
        <name>Mg(2+)</name>
        <dbReference type="ChEBI" id="CHEBI:18420"/>
        <label>2</label>
        <note>catalytic</note>
    </ligand>
</feature>
<feature type="binding site" evidence="1">
    <location>
        <position position="38"/>
    </location>
    <ligand>
        <name>Mg(2+)</name>
        <dbReference type="ChEBI" id="CHEBI:18420"/>
        <label>2</label>
        <note>catalytic</note>
    </ligand>
</feature>
<feature type="binding site" evidence="1">
    <location>
        <position position="194"/>
    </location>
    <ligand>
        <name>Mg(2+)</name>
        <dbReference type="ChEBI" id="CHEBI:18420"/>
        <label>2</label>
        <note>catalytic</note>
    </ligand>
</feature>
<feature type="binding site" evidence="1">
    <location>
        <position position="199"/>
    </location>
    <ligand>
        <name>Mg(2+)</name>
        <dbReference type="ChEBI" id="CHEBI:18420"/>
        <label>2</label>
        <note>catalytic</note>
    </ligand>
</feature>
<feature type="site" description="Important for substrate binding and specificity" evidence="1">
    <location>
        <position position="42"/>
    </location>
</feature>
<feature type="site" description="Important for substrate binding and specificity" evidence="1">
    <location>
        <position position="90"/>
    </location>
</feature>
<feature type="site" description="Important for substrate binding and specificity" evidence="1">
    <location>
        <position position="137"/>
    </location>
</feature>
<feature type="site" description="Important for substrate binding and specificity" evidence="1">
    <location>
        <position position="159"/>
    </location>
</feature>
<comment type="function">
    <text evidence="1">Trims short 3' overhangs of a variety of RNA species, leaving a one or two nucleotide 3' overhang. Responsible for the end-turnover of tRNA: specifically removes the terminal AMP residue from uncharged tRNA (tRNA-C-C-A). Also appears to be involved in tRNA biosynthesis.</text>
</comment>
<comment type="cofactor">
    <cofactor evidence="1">
        <name>Mg(2+)</name>
        <dbReference type="ChEBI" id="CHEBI:18420"/>
    </cofactor>
    <text evidence="1">Binds two Mg(2+) per subunit. The active form of the enzyme binds two Mg(2+) ions in its active site. The first Mg(2+) forms only one salt bridge with the protein.</text>
</comment>
<comment type="subunit">
    <text evidence="1">Homodimer.</text>
</comment>
<comment type="similarity">
    <text evidence="1">Belongs to the RNase T family.</text>
</comment>
<keyword id="KW-0269">Exonuclease</keyword>
<keyword id="KW-0378">Hydrolase</keyword>
<keyword id="KW-0460">Magnesium</keyword>
<keyword id="KW-0479">Metal-binding</keyword>
<keyword id="KW-0540">Nuclease</keyword>
<keyword id="KW-0819">tRNA processing</keyword>
<organism>
    <name type="scientific">Pseudomonas syringae pv. syringae (strain B728a)</name>
    <dbReference type="NCBI Taxonomy" id="205918"/>
    <lineage>
        <taxon>Bacteria</taxon>
        <taxon>Pseudomonadati</taxon>
        <taxon>Pseudomonadota</taxon>
        <taxon>Gammaproteobacteria</taxon>
        <taxon>Pseudomonadales</taxon>
        <taxon>Pseudomonadaceae</taxon>
        <taxon>Pseudomonas</taxon>
        <taxon>Pseudomonas syringae</taxon>
    </lineage>
</organism>
<proteinExistence type="inferred from homology"/>
<gene>
    <name evidence="1" type="primary">rnt</name>
    <name type="ordered locus">Psyr_3895</name>
</gene>
<dbReference type="EC" id="3.1.13.-" evidence="1"/>
<dbReference type="EMBL" id="CP000075">
    <property type="protein sequence ID" value="AAY38925.1"/>
    <property type="molecule type" value="Genomic_DNA"/>
</dbReference>
<dbReference type="RefSeq" id="WP_003412908.1">
    <property type="nucleotide sequence ID" value="NC_007005.1"/>
</dbReference>
<dbReference type="RefSeq" id="YP_236963.1">
    <property type="nucleotide sequence ID" value="NC_007005.1"/>
</dbReference>
<dbReference type="SMR" id="Q4ZPJ7"/>
<dbReference type="STRING" id="205918.Psyr_3895"/>
<dbReference type="GeneID" id="65076566"/>
<dbReference type="KEGG" id="psb:Psyr_3895"/>
<dbReference type="PATRIC" id="fig|205918.7.peg.4006"/>
<dbReference type="eggNOG" id="COG0847">
    <property type="taxonomic scope" value="Bacteria"/>
</dbReference>
<dbReference type="HOGENOM" id="CLU_082724_0_0_6"/>
<dbReference type="OrthoDB" id="9778264at2"/>
<dbReference type="Proteomes" id="UP000000426">
    <property type="component" value="Chromosome"/>
</dbReference>
<dbReference type="GO" id="GO:0005829">
    <property type="term" value="C:cytosol"/>
    <property type="evidence" value="ECO:0007669"/>
    <property type="project" value="TreeGrafter"/>
</dbReference>
<dbReference type="GO" id="GO:0008408">
    <property type="term" value="F:3'-5' exonuclease activity"/>
    <property type="evidence" value="ECO:0007669"/>
    <property type="project" value="TreeGrafter"/>
</dbReference>
<dbReference type="GO" id="GO:0000287">
    <property type="term" value="F:magnesium ion binding"/>
    <property type="evidence" value="ECO:0007669"/>
    <property type="project" value="UniProtKB-UniRule"/>
</dbReference>
<dbReference type="GO" id="GO:0003676">
    <property type="term" value="F:nucleic acid binding"/>
    <property type="evidence" value="ECO:0007669"/>
    <property type="project" value="InterPro"/>
</dbReference>
<dbReference type="GO" id="GO:0016896">
    <property type="term" value="F:RNA exonuclease activity, producing 5'-phosphomonoesters"/>
    <property type="evidence" value="ECO:0007669"/>
    <property type="project" value="UniProtKB-UniRule"/>
</dbReference>
<dbReference type="GO" id="GO:0045004">
    <property type="term" value="P:DNA replication proofreading"/>
    <property type="evidence" value="ECO:0007669"/>
    <property type="project" value="TreeGrafter"/>
</dbReference>
<dbReference type="GO" id="GO:0008033">
    <property type="term" value="P:tRNA processing"/>
    <property type="evidence" value="ECO:0007669"/>
    <property type="project" value="UniProtKB-KW"/>
</dbReference>
<dbReference type="CDD" id="cd06134">
    <property type="entry name" value="RNaseT"/>
    <property type="match status" value="1"/>
</dbReference>
<dbReference type="FunFam" id="3.30.420.10:FF:000009">
    <property type="entry name" value="Ribonuclease T"/>
    <property type="match status" value="1"/>
</dbReference>
<dbReference type="Gene3D" id="3.30.420.10">
    <property type="entry name" value="Ribonuclease H-like superfamily/Ribonuclease H"/>
    <property type="match status" value="1"/>
</dbReference>
<dbReference type="HAMAP" id="MF_00157">
    <property type="entry name" value="RNase_T"/>
    <property type="match status" value="1"/>
</dbReference>
<dbReference type="InterPro" id="IPR013520">
    <property type="entry name" value="Exonuclease_RNaseT/DNA_pol3"/>
</dbReference>
<dbReference type="InterPro" id="IPR005987">
    <property type="entry name" value="RNase_T"/>
</dbReference>
<dbReference type="InterPro" id="IPR012337">
    <property type="entry name" value="RNaseH-like_sf"/>
</dbReference>
<dbReference type="InterPro" id="IPR036397">
    <property type="entry name" value="RNaseH_sf"/>
</dbReference>
<dbReference type="NCBIfam" id="TIGR01298">
    <property type="entry name" value="RNaseT"/>
    <property type="match status" value="1"/>
</dbReference>
<dbReference type="PANTHER" id="PTHR30231">
    <property type="entry name" value="DNA POLYMERASE III SUBUNIT EPSILON"/>
    <property type="match status" value="1"/>
</dbReference>
<dbReference type="PANTHER" id="PTHR30231:SF2">
    <property type="entry name" value="RIBONUCLEASE T"/>
    <property type="match status" value="1"/>
</dbReference>
<dbReference type="Pfam" id="PF00929">
    <property type="entry name" value="RNase_T"/>
    <property type="match status" value="1"/>
</dbReference>
<dbReference type="SMART" id="SM00479">
    <property type="entry name" value="EXOIII"/>
    <property type="match status" value="1"/>
</dbReference>
<dbReference type="SUPFAM" id="SSF53098">
    <property type="entry name" value="Ribonuclease H-like"/>
    <property type="match status" value="1"/>
</dbReference>
<evidence type="ECO:0000255" key="1">
    <source>
        <dbReference type="HAMAP-Rule" id="MF_00157"/>
    </source>
</evidence>
<evidence type="ECO:0000256" key="2">
    <source>
        <dbReference type="SAM" id="MobiDB-lite"/>
    </source>
</evidence>
<accession>Q4ZPJ7</accession>
<protein>
    <recommendedName>
        <fullName evidence="1">Ribonuclease T</fullName>
        <ecNumber evidence="1">3.1.13.-</ecNumber>
    </recommendedName>
    <alternativeName>
        <fullName evidence="1">Exoribonuclease T</fullName>
        <shortName evidence="1">RNase T</shortName>
    </alternativeName>
</protein>